<organism>
    <name type="scientific">Pseudomonas savastanoi pv. phaseolicola (strain 1448A / Race 6)</name>
    <name type="common">Pseudomonas syringae pv. phaseolicola (strain 1448A / Race 6)</name>
    <dbReference type="NCBI Taxonomy" id="264730"/>
    <lineage>
        <taxon>Bacteria</taxon>
        <taxon>Pseudomonadati</taxon>
        <taxon>Pseudomonadota</taxon>
        <taxon>Gammaproteobacteria</taxon>
        <taxon>Pseudomonadales</taxon>
        <taxon>Pseudomonadaceae</taxon>
        <taxon>Pseudomonas</taxon>
    </lineage>
</organism>
<protein>
    <recommendedName>
        <fullName evidence="1">DNA replication and repair protein RecF</fullName>
    </recommendedName>
</protein>
<evidence type="ECO:0000255" key="1">
    <source>
        <dbReference type="HAMAP-Rule" id="MF_00365"/>
    </source>
</evidence>
<comment type="function">
    <text evidence="1">The RecF protein is involved in DNA metabolism; it is required for DNA replication and normal SOS inducibility. RecF binds preferentially to single-stranded, linear DNA. It also seems to bind ATP.</text>
</comment>
<comment type="subcellular location">
    <subcellularLocation>
        <location evidence="1">Cytoplasm</location>
    </subcellularLocation>
</comment>
<comment type="similarity">
    <text evidence="1">Belongs to the RecF family.</text>
</comment>
<reference key="1">
    <citation type="journal article" date="2005" name="J. Bacteriol.">
        <title>Whole-genome sequence analysis of Pseudomonas syringae pv. phaseolicola 1448A reveals divergence among pathovars in genes involved in virulence and transposition.</title>
        <authorList>
            <person name="Joardar V."/>
            <person name="Lindeberg M."/>
            <person name="Jackson R.W."/>
            <person name="Selengut J."/>
            <person name="Dodson R."/>
            <person name="Brinkac L.M."/>
            <person name="Daugherty S.C."/>
            <person name="DeBoy R.T."/>
            <person name="Durkin A.S."/>
            <person name="Gwinn Giglio M."/>
            <person name="Madupu R."/>
            <person name="Nelson W.C."/>
            <person name="Rosovitz M.J."/>
            <person name="Sullivan S.A."/>
            <person name="Crabtree J."/>
            <person name="Creasy T."/>
            <person name="Davidsen T.M."/>
            <person name="Haft D.H."/>
            <person name="Zafar N."/>
            <person name="Zhou L."/>
            <person name="Halpin R."/>
            <person name="Holley T."/>
            <person name="Khouri H.M."/>
            <person name="Feldblyum T.V."/>
            <person name="White O."/>
            <person name="Fraser C.M."/>
            <person name="Chatterjee A.K."/>
            <person name="Cartinhour S."/>
            <person name="Schneider D."/>
            <person name="Mansfield J.W."/>
            <person name="Collmer A."/>
            <person name="Buell R."/>
        </authorList>
    </citation>
    <scope>NUCLEOTIDE SEQUENCE [LARGE SCALE GENOMIC DNA]</scope>
    <source>
        <strain>1448A / Race 6</strain>
    </source>
</reference>
<gene>
    <name evidence="1" type="primary">recF</name>
    <name type="ordered locus">PSPPH_0003</name>
</gene>
<name>RECF_PSE14</name>
<accession>Q48QJ8</accession>
<feature type="chain" id="PRO_0000236136" description="DNA replication and repair protein RecF">
    <location>
        <begin position="1"/>
        <end position="367"/>
    </location>
</feature>
<feature type="binding site" evidence="1">
    <location>
        <begin position="30"/>
        <end position="37"/>
    </location>
    <ligand>
        <name>ATP</name>
        <dbReference type="ChEBI" id="CHEBI:30616"/>
    </ligand>
</feature>
<proteinExistence type="inferred from homology"/>
<dbReference type="EMBL" id="CP000058">
    <property type="protein sequence ID" value="AAZ35814.1"/>
    <property type="molecule type" value="Genomic_DNA"/>
</dbReference>
<dbReference type="RefSeq" id="WP_011167281.1">
    <property type="nucleotide sequence ID" value="NC_005773.3"/>
</dbReference>
<dbReference type="SMR" id="Q48QJ8"/>
<dbReference type="KEGG" id="psp:PSPPH_0003"/>
<dbReference type="eggNOG" id="COG1195">
    <property type="taxonomic scope" value="Bacteria"/>
</dbReference>
<dbReference type="HOGENOM" id="CLU_040267_0_0_6"/>
<dbReference type="Proteomes" id="UP000000551">
    <property type="component" value="Chromosome"/>
</dbReference>
<dbReference type="GO" id="GO:0005737">
    <property type="term" value="C:cytoplasm"/>
    <property type="evidence" value="ECO:0007669"/>
    <property type="project" value="UniProtKB-SubCell"/>
</dbReference>
<dbReference type="GO" id="GO:0005524">
    <property type="term" value="F:ATP binding"/>
    <property type="evidence" value="ECO:0007669"/>
    <property type="project" value="UniProtKB-UniRule"/>
</dbReference>
<dbReference type="GO" id="GO:0003697">
    <property type="term" value="F:single-stranded DNA binding"/>
    <property type="evidence" value="ECO:0007669"/>
    <property type="project" value="UniProtKB-UniRule"/>
</dbReference>
<dbReference type="GO" id="GO:0006260">
    <property type="term" value="P:DNA replication"/>
    <property type="evidence" value="ECO:0007669"/>
    <property type="project" value="UniProtKB-UniRule"/>
</dbReference>
<dbReference type="GO" id="GO:0000731">
    <property type="term" value="P:DNA synthesis involved in DNA repair"/>
    <property type="evidence" value="ECO:0007669"/>
    <property type="project" value="TreeGrafter"/>
</dbReference>
<dbReference type="GO" id="GO:0006302">
    <property type="term" value="P:double-strand break repair"/>
    <property type="evidence" value="ECO:0007669"/>
    <property type="project" value="TreeGrafter"/>
</dbReference>
<dbReference type="GO" id="GO:0009432">
    <property type="term" value="P:SOS response"/>
    <property type="evidence" value="ECO:0007669"/>
    <property type="project" value="UniProtKB-UniRule"/>
</dbReference>
<dbReference type="FunFam" id="1.20.1050.90:FF:000003">
    <property type="entry name" value="DNA replication and repair protein RecF"/>
    <property type="match status" value="1"/>
</dbReference>
<dbReference type="Gene3D" id="3.40.50.300">
    <property type="entry name" value="P-loop containing nucleotide triphosphate hydrolases"/>
    <property type="match status" value="1"/>
</dbReference>
<dbReference type="Gene3D" id="1.20.1050.90">
    <property type="entry name" value="RecF/RecN/SMC, N-terminal domain"/>
    <property type="match status" value="1"/>
</dbReference>
<dbReference type="HAMAP" id="MF_00365">
    <property type="entry name" value="RecF"/>
    <property type="match status" value="1"/>
</dbReference>
<dbReference type="InterPro" id="IPR001238">
    <property type="entry name" value="DNA-binding_RecF"/>
</dbReference>
<dbReference type="InterPro" id="IPR018078">
    <property type="entry name" value="DNA-binding_RecF_CS"/>
</dbReference>
<dbReference type="InterPro" id="IPR027417">
    <property type="entry name" value="P-loop_NTPase"/>
</dbReference>
<dbReference type="InterPro" id="IPR003395">
    <property type="entry name" value="RecF/RecN/SMC_N"/>
</dbReference>
<dbReference type="InterPro" id="IPR042174">
    <property type="entry name" value="RecF_2"/>
</dbReference>
<dbReference type="NCBIfam" id="TIGR00611">
    <property type="entry name" value="recf"/>
    <property type="match status" value="1"/>
</dbReference>
<dbReference type="PANTHER" id="PTHR32182">
    <property type="entry name" value="DNA REPLICATION AND REPAIR PROTEIN RECF"/>
    <property type="match status" value="1"/>
</dbReference>
<dbReference type="PANTHER" id="PTHR32182:SF0">
    <property type="entry name" value="DNA REPLICATION AND REPAIR PROTEIN RECF"/>
    <property type="match status" value="1"/>
</dbReference>
<dbReference type="Pfam" id="PF02463">
    <property type="entry name" value="SMC_N"/>
    <property type="match status" value="1"/>
</dbReference>
<dbReference type="SUPFAM" id="SSF52540">
    <property type="entry name" value="P-loop containing nucleoside triphosphate hydrolases"/>
    <property type="match status" value="1"/>
</dbReference>
<dbReference type="PROSITE" id="PS00617">
    <property type="entry name" value="RECF_1"/>
    <property type="match status" value="1"/>
</dbReference>
<dbReference type="PROSITE" id="PS00618">
    <property type="entry name" value="RECF_2"/>
    <property type="match status" value="1"/>
</dbReference>
<sequence>MSLSRVSVTGVRNLHPVTLSPSPRINILYGANGSGKTSVLEAIHLLGIARSFRSSRLLPVIQYVQPSCTVFGQVDLAQGGHSNLGVSRDRQGEFQIRIDGQNARSAAQLAEILPLQLINPDSFRLLEGAPKIRRQFLDWGVFHVEPRFMVTWQRLQKALKQRNSWLRHGTLDAASQAAWDRELCYASDEIDEFRRAYIKALKPVFEQTLSELVELEGLTLSYYRGWDKEKELSTVLASSLHRDQQMGHTQAGPQRADLRLRLGAHNAADILSRGQQKLVVCALRIAQGHLVSQVRRGQCIYLVDDLPSELDDNHRRALCRLLEELRCQVFITCVDQEFLREGWQTETPVALFHVEQGRITQTHDHRE</sequence>
<keyword id="KW-0067">ATP-binding</keyword>
<keyword id="KW-0963">Cytoplasm</keyword>
<keyword id="KW-0227">DNA damage</keyword>
<keyword id="KW-0234">DNA repair</keyword>
<keyword id="KW-0235">DNA replication</keyword>
<keyword id="KW-0238">DNA-binding</keyword>
<keyword id="KW-0547">Nucleotide-binding</keyword>
<keyword id="KW-0742">SOS response</keyword>